<proteinExistence type="inferred from homology"/>
<name>TTCA_YERE8</name>
<organism>
    <name type="scientific">Yersinia enterocolitica serotype O:8 / biotype 1B (strain NCTC 13174 / 8081)</name>
    <dbReference type="NCBI Taxonomy" id="393305"/>
    <lineage>
        <taxon>Bacteria</taxon>
        <taxon>Pseudomonadati</taxon>
        <taxon>Pseudomonadota</taxon>
        <taxon>Gammaproteobacteria</taxon>
        <taxon>Enterobacterales</taxon>
        <taxon>Yersiniaceae</taxon>
        <taxon>Yersinia</taxon>
    </lineage>
</organism>
<protein>
    <recommendedName>
        <fullName evidence="1">tRNA-cytidine(32) 2-sulfurtransferase</fullName>
        <ecNumber evidence="1">2.8.1.-</ecNumber>
    </recommendedName>
    <alternativeName>
        <fullName evidence="1">Two-thiocytidine biosynthesis protein A</fullName>
    </alternativeName>
    <alternativeName>
        <fullName evidence="1">tRNA 2-thiocytidine biosynthesis protein TtcA</fullName>
    </alternativeName>
</protein>
<keyword id="KW-0004">4Fe-4S</keyword>
<keyword id="KW-0067">ATP-binding</keyword>
<keyword id="KW-0963">Cytoplasm</keyword>
<keyword id="KW-0408">Iron</keyword>
<keyword id="KW-0411">Iron-sulfur</keyword>
<keyword id="KW-0460">Magnesium</keyword>
<keyword id="KW-0479">Metal-binding</keyword>
<keyword id="KW-0547">Nucleotide-binding</keyword>
<keyword id="KW-0694">RNA-binding</keyword>
<keyword id="KW-0808">Transferase</keyword>
<keyword id="KW-0819">tRNA processing</keyword>
<keyword id="KW-0820">tRNA-binding</keyword>
<comment type="function">
    <text evidence="1">Catalyzes the ATP-dependent 2-thiolation of cytidine in position 32 of tRNA, to form 2-thiocytidine (s(2)C32). The sulfur atoms are provided by the cysteine/cysteine desulfurase (IscS) system.</text>
</comment>
<comment type="catalytic activity">
    <reaction evidence="1">
        <text>cytidine(32) in tRNA + S-sulfanyl-L-cysteinyl-[cysteine desulfurase] + AH2 + ATP = 2-thiocytidine(32) in tRNA + L-cysteinyl-[cysteine desulfurase] + A + AMP + diphosphate + H(+)</text>
        <dbReference type="Rhea" id="RHEA:57048"/>
        <dbReference type="Rhea" id="RHEA-COMP:10288"/>
        <dbReference type="Rhea" id="RHEA-COMP:12157"/>
        <dbReference type="Rhea" id="RHEA-COMP:12158"/>
        <dbReference type="Rhea" id="RHEA-COMP:14821"/>
        <dbReference type="ChEBI" id="CHEBI:13193"/>
        <dbReference type="ChEBI" id="CHEBI:15378"/>
        <dbReference type="ChEBI" id="CHEBI:17499"/>
        <dbReference type="ChEBI" id="CHEBI:29950"/>
        <dbReference type="ChEBI" id="CHEBI:30616"/>
        <dbReference type="ChEBI" id="CHEBI:33019"/>
        <dbReference type="ChEBI" id="CHEBI:61963"/>
        <dbReference type="ChEBI" id="CHEBI:82748"/>
        <dbReference type="ChEBI" id="CHEBI:141453"/>
        <dbReference type="ChEBI" id="CHEBI:456215"/>
    </reaction>
    <physiologicalReaction direction="left-to-right" evidence="1">
        <dbReference type="Rhea" id="RHEA:57049"/>
    </physiologicalReaction>
</comment>
<comment type="cofactor">
    <cofactor evidence="1">
        <name>Mg(2+)</name>
        <dbReference type="ChEBI" id="CHEBI:18420"/>
    </cofactor>
</comment>
<comment type="cofactor">
    <cofactor evidence="1">
        <name>[4Fe-4S] cluster</name>
        <dbReference type="ChEBI" id="CHEBI:49883"/>
    </cofactor>
    <text evidence="1">Binds 1 [4Fe-4S] cluster per subunit. The cluster is chelated by three Cys residues, the fourth Fe has a free coordination site that may bind a sulfur atom transferred from the persulfide of IscS.</text>
</comment>
<comment type="pathway">
    <text evidence="1">tRNA modification.</text>
</comment>
<comment type="subunit">
    <text evidence="1">Homodimer.</text>
</comment>
<comment type="subcellular location">
    <subcellularLocation>
        <location evidence="1">Cytoplasm</location>
    </subcellularLocation>
</comment>
<comment type="miscellaneous">
    <text evidence="1">The thiolation reaction likely consists of two steps: a first activation step by ATP to form an adenylated intermediate of the target base of tRNA, and a second nucleophilic substitution step of the sulfur (S) atom supplied by the hydrosulfide attached to the Fe-S cluster.</text>
</comment>
<comment type="similarity">
    <text evidence="1">Belongs to the TtcA family.</text>
</comment>
<sequence>MQEKQVVNQKEQYDLNKLQKRLRRNVGQAIADFNMIEEGDRVMVCLSGGKDSYTMLDILQNLQKSAPINFTLIAVNLDQKQPGFPEDILPAYLDKQGVEYKIVEENTYGIVKEIIPEGKTTCSLCSRLRRGILYRTATELGATKIALGHHRDDILQTLFLNMFYGGKLKGMPPKLMSDDGKHVVIRPLAYCREKDIERFAIAREYPIIPCNLCGSQPNLQRQVIKDMLRDWDKQYPGRIETMFSAMQNVVPSHLNDHKLFDFKNITHNSEIVDGGDLAFDREELPLQPVSWQPEDAEDGDTQPLVRLDVLEIK</sequence>
<accession>A1JND8</accession>
<evidence type="ECO:0000255" key="1">
    <source>
        <dbReference type="HAMAP-Rule" id="MF_01850"/>
    </source>
</evidence>
<dbReference type="EC" id="2.8.1.-" evidence="1"/>
<dbReference type="EMBL" id="AM286415">
    <property type="protein sequence ID" value="CAL12178.1"/>
    <property type="molecule type" value="Genomic_DNA"/>
</dbReference>
<dbReference type="RefSeq" id="WP_011816357.1">
    <property type="nucleotide sequence ID" value="NC_008800.1"/>
</dbReference>
<dbReference type="RefSeq" id="YP_001006348.1">
    <property type="nucleotide sequence ID" value="NC_008800.1"/>
</dbReference>
<dbReference type="SMR" id="A1JND8"/>
<dbReference type="KEGG" id="yen:YE2106"/>
<dbReference type="PATRIC" id="fig|393305.7.peg.2269"/>
<dbReference type="eggNOG" id="COG0037">
    <property type="taxonomic scope" value="Bacteria"/>
</dbReference>
<dbReference type="HOGENOM" id="CLU_026481_0_0_6"/>
<dbReference type="OrthoDB" id="9801054at2"/>
<dbReference type="Proteomes" id="UP000000642">
    <property type="component" value="Chromosome"/>
</dbReference>
<dbReference type="GO" id="GO:0005737">
    <property type="term" value="C:cytoplasm"/>
    <property type="evidence" value="ECO:0007669"/>
    <property type="project" value="UniProtKB-SubCell"/>
</dbReference>
<dbReference type="GO" id="GO:0051539">
    <property type="term" value="F:4 iron, 4 sulfur cluster binding"/>
    <property type="evidence" value="ECO:0007669"/>
    <property type="project" value="UniProtKB-UniRule"/>
</dbReference>
<dbReference type="GO" id="GO:0005524">
    <property type="term" value="F:ATP binding"/>
    <property type="evidence" value="ECO:0007669"/>
    <property type="project" value="UniProtKB-UniRule"/>
</dbReference>
<dbReference type="GO" id="GO:0000287">
    <property type="term" value="F:magnesium ion binding"/>
    <property type="evidence" value="ECO:0007669"/>
    <property type="project" value="UniProtKB-UniRule"/>
</dbReference>
<dbReference type="GO" id="GO:0016783">
    <property type="term" value="F:sulfurtransferase activity"/>
    <property type="evidence" value="ECO:0007669"/>
    <property type="project" value="UniProtKB-UniRule"/>
</dbReference>
<dbReference type="GO" id="GO:0000049">
    <property type="term" value="F:tRNA binding"/>
    <property type="evidence" value="ECO:0007669"/>
    <property type="project" value="UniProtKB-KW"/>
</dbReference>
<dbReference type="GO" id="GO:0034227">
    <property type="term" value="P:tRNA thio-modification"/>
    <property type="evidence" value="ECO:0007669"/>
    <property type="project" value="UniProtKB-UniRule"/>
</dbReference>
<dbReference type="CDD" id="cd24138">
    <property type="entry name" value="TtcA-like"/>
    <property type="match status" value="1"/>
</dbReference>
<dbReference type="Gene3D" id="3.40.50.620">
    <property type="entry name" value="HUPs"/>
    <property type="match status" value="1"/>
</dbReference>
<dbReference type="HAMAP" id="MF_01850">
    <property type="entry name" value="TtcA"/>
    <property type="match status" value="1"/>
</dbReference>
<dbReference type="InterPro" id="IPR014729">
    <property type="entry name" value="Rossmann-like_a/b/a_fold"/>
</dbReference>
<dbReference type="InterPro" id="IPR011063">
    <property type="entry name" value="TilS/TtcA_N"/>
</dbReference>
<dbReference type="InterPro" id="IPR012089">
    <property type="entry name" value="tRNA_Cyd_32_2_STrfase"/>
</dbReference>
<dbReference type="InterPro" id="IPR035107">
    <property type="entry name" value="tRNA_thiolation_TtcA_Ctu1"/>
</dbReference>
<dbReference type="NCBIfam" id="NF007972">
    <property type="entry name" value="PRK10696.1"/>
    <property type="match status" value="1"/>
</dbReference>
<dbReference type="PANTHER" id="PTHR43686:SF1">
    <property type="entry name" value="AMINOTRAN_5 DOMAIN-CONTAINING PROTEIN"/>
    <property type="match status" value="1"/>
</dbReference>
<dbReference type="PANTHER" id="PTHR43686">
    <property type="entry name" value="SULFURTRANSFERASE-RELATED"/>
    <property type="match status" value="1"/>
</dbReference>
<dbReference type="Pfam" id="PF01171">
    <property type="entry name" value="ATP_bind_3"/>
    <property type="match status" value="1"/>
</dbReference>
<dbReference type="PIRSF" id="PIRSF004976">
    <property type="entry name" value="ATPase_YdaO"/>
    <property type="match status" value="1"/>
</dbReference>
<dbReference type="SUPFAM" id="SSF52402">
    <property type="entry name" value="Adenine nucleotide alpha hydrolases-like"/>
    <property type="match status" value="1"/>
</dbReference>
<feature type="chain" id="PRO_0000348880" description="tRNA-cytidine(32) 2-sulfurtransferase">
    <location>
        <begin position="1"/>
        <end position="313"/>
    </location>
</feature>
<feature type="short sequence motif" description="PP-loop motif" evidence="1">
    <location>
        <begin position="47"/>
        <end position="52"/>
    </location>
</feature>
<feature type="binding site" evidence="1">
    <location>
        <position position="122"/>
    </location>
    <ligand>
        <name>[4Fe-4S] cluster</name>
        <dbReference type="ChEBI" id="CHEBI:49883"/>
    </ligand>
</feature>
<feature type="binding site" evidence="1">
    <location>
        <position position="125"/>
    </location>
    <ligand>
        <name>[4Fe-4S] cluster</name>
        <dbReference type="ChEBI" id="CHEBI:49883"/>
    </ligand>
</feature>
<feature type="binding site" evidence="1">
    <location>
        <position position="213"/>
    </location>
    <ligand>
        <name>[4Fe-4S] cluster</name>
        <dbReference type="ChEBI" id="CHEBI:49883"/>
    </ligand>
</feature>
<gene>
    <name evidence="1" type="primary">ttcA</name>
    <name type="ordered locus">YE2106</name>
</gene>
<reference key="1">
    <citation type="journal article" date="2006" name="PLoS Genet.">
        <title>The complete genome sequence and comparative genome analysis of the high pathogenicity Yersinia enterocolitica strain 8081.</title>
        <authorList>
            <person name="Thomson N.R."/>
            <person name="Howard S."/>
            <person name="Wren B.W."/>
            <person name="Holden M.T.G."/>
            <person name="Crossman L."/>
            <person name="Challis G.L."/>
            <person name="Churcher C."/>
            <person name="Mungall K."/>
            <person name="Brooks K."/>
            <person name="Chillingworth T."/>
            <person name="Feltwell T."/>
            <person name="Abdellah Z."/>
            <person name="Hauser H."/>
            <person name="Jagels K."/>
            <person name="Maddison M."/>
            <person name="Moule S."/>
            <person name="Sanders M."/>
            <person name="Whitehead S."/>
            <person name="Quail M.A."/>
            <person name="Dougan G."/>
            <person name="Parkhill J."/>
            <person name="Prentice M.B."/>
        </authorList>
    </citation>
    <scope>NUCLEOTIDE SEQUENCE [LARGE SCALE GENOMIC DNA]</scope>
    <source>
        <strain>NCTC 13174 / 8081</strain>
    </source>
</reference>